<comment type="function">
    <text evidence="1">Associates with aggregated proteins, together with IbpA, to stabilize and protect them from irreversible denaturation and extensive proteolysis during heat shock and oxidative stress. Aggregated proteins bound to the IbpAB complex are more efficiently refolded and reactivated by the ATP-dependent chaperone systems ClpB and DnaK/DnaJ/GrpE. Its activity is ATP-independent.</text>
</comment>
<comment type="subunit">
    <text evidence="1">Homodimer. Forms homomultimers of about 100-150 subunits at optimal growth temperatures. Conformation changes to oligomers at high temperatures or high ionic concentrations. The decrease in size of the multimers is accompanied by an increase in chaperone activity.</text>
</comment>
<comment type="subcellular location">
    <subcellularLocation>
        <location evidence="1">Cytoplasm</location>
    </subcellularLocation>
</comment>
<comment type="domain">
    <text evidence="1">The N- and C-terminal flexible termini are involved in oligomerization and in the binding of non-native substrate proteins, and are essential for chaperone activity.</text>
</comment>
<comment type="similarity">
    <text evidence="1 2">Belongs to the small heat shock protein (HSP20) family.</text>
</comment>
<evidence type="ECO:0000255" key="1">
    <source>
        <dbReference type="HAMAP-Rule" id="MF_02001"/>
    </source>
</evidence>
<evidence type="ECO:0000255" key="2">
    <source>
        <dbReference type="PROSITE-ProRule" id="PRU00285"/>
    </source>
</evidence>
<organism>
    <name type="scientific">Shigella flexneri serotype 5b (strain 8401)</name>
    <dbReference type="NCBI Taxonomy" id="373384"/>
    <lineage>
        <taxon>Bacteria</taxon>
        <taxon>Pseudomonadati</taxon>
        <taxon>Pseudomonadota</taxon>
        <taxon>Gammaproteobacteria</taxon>
        <taxon>Enterobacterales</taxon>
        <taxon>Enterobacteriaceae</taxon>
        <taxon>Shigella</taxon>
    </lineage>
</organism>
<name>IBPB_SHIF8</name>
<reference key="1">
    <citation type="journal article" date="2006" name="BMC Genomics">
        <title>Complete genome sequence of Shigella flexneri 5b and comparison with Shigella flexneri 2a.</title>
        <authorList>
            <person name="Nie H."/>
            <person name="Yang F."/>
            <person name="Zhang X."/>
            <person name="Yang J."/>
            <person name="Chen L."/>
            <person name="Wang J."/>
            <person name="Xiong Z."/>
            <person name="Peng J."/>
            <person name="Sun L."/>
            <person name="Dong J."/>
            <person name="Xue Y."/>
            <person name="Xu X."/>
            <person name="Chen S."/>
            <person name="Yao Z."/>
            <person name="Shen Y."/>
            <person name="Jin Q."/>
        </authorList>
    </citation>
    <scope>NUCLEOTIDE SEQUENCE [LARGE SCALE GENOMIC DNA]</scope>
    <source>
        <strain>8401</strain>
    </source>
</reference>
<feature type="chain" id="PRO_1000022032" description="Small heat shock protein IbpB">
    <location>
        <begin position="1"/>
        <end position="142"/>
    </location>
</feature>
<feature type="domain" description="sHSP" evidence="2">
    <location>
        <begin position="26"/>
        <end position="137"/>
    </location>
</feature>
<gene>
    <name evidence="1" type="primary">ibpB</name>
    <name type="ordered locus">SFV_3825</name>
</gene>
<protein>
    <recommendedName>
        <fullName evidence="1">Small heat shock protein IbpB</fullName>
    </recommendedName>
    <alternativeName>
        <fullName evidence="1">16 kDa heat shock protein B</fullName>
    </alternativeName>
</protein>
<accession>Q0SYM9</accession>
<keyword id="KW-0143">Chaperone</keyword>
<keyword id="KW-0963">Cytoplasm</keyword>
<keyword id="KW-0346">Stress response</keyword>
<dbReference type="EMBL" id="CP000266">
    <property type="protein sequence ID" value="ABF05836.1"/>
    <property type="molecule type" value="Genomic_DNA"/>
</dbReference>
<dbReference type="RefSeq" id="WP_001243431.1">
    <property type="nucleotide sequence ID" value="NC_008258.1"/>
</dbReference>
<dbReference type="SMR" id="Q0SYM9"/>
<dbReference type="GeneID" id="93778427"/>
<dbReference type="KEGG" id="sfv:SFV_3825"/>
<dbReference type="HOGENOM" id="CLU_046737_4_2_6"/>
<dbReference type="Proteomes" id="UP000000659">
    <property type="component" value="Chromosome"/>
</dbReference>
<dbReference type="GO" id="GO:0005737">
    <property type="term" value="C:cytoplasm"/>
    <property type="evidence" value="ECO:0007669"/>
    <property type="project" value="UniProtKB-SubCell"/>
</dbReference>
<dbReference type="GO" id="GO:0050821">
    <property type="term" value="P:protein stabilization"/>
    <property type="evidence" value="ECO:0007669"/>
    <property type="project" value="UniProtKB-UniRule"/>
</dbReference>
<dbReference type="CDD" id="cd06470">
    <property type="entry name" value="ACD_IbpA-B_like"/>
    <property type="match status" value="1"/>
</dbReference>
<dbReference type="FunFam" id="2.60.40.790:FF:000005">
    <property type="entry name" value="Small heat shock protein IbpB"/>
    <property type="match status" value="1"/>
</dbReference>
<dbReference type="Gene3D" id="2.60.40.790">
    <property type="match status" value="1"/>
</dbReference>
<dbReference type="HAMAP" id="MF_02001">
    <property type="entry name" value="HSP20_IbpB"/>
    <property type="match status" value="1"/>
</dbReference>
<dbReference type="InterPro" id="IPR002068">
    <property type="entry name" value="A-crystallin/Hsp20_dom"/>
</dbReference>
<dbReference type="InterPro" id="IPR037913">
    <property type="entry name" value="ACD_IbpA/B"/>
</dbReference>
<dbReference type="InterPro" id="IPR008978">
    <property type="entry name" value="HSP20-like_chaperone"/>
</dbReference>
<dbReference type="InterPro" id="IPR022848">
    <property type="entry name" value="HSP20_IbpB"/>
</dbReference>
<dbReference type="NCBIfam" id="NF008618">
    <property type="entry name" value="PRK11597.1"/>
    <property type="match status" value="1"/>
</dbReference>
<dbReference type="PANTHER" id="PTHR47062">
    <property type="match status" value="1"/>
</dbReference>
<dbReference type="PANTHER" id="PTHR47062:SF2">
    <property type="entry name" value="SMALL HEAT SHOCK PROTEIN IBPB"/>
    <property type="match status" value="1"/>
</dbReference>
<dbReference type="Pfam" id="PF00011">
    <property type="entry name" value="HSP20"/>
    <property type="match status" value="1"/>
</dbReference>
<dbReference type="SUPFAM" id="SSF49764">
    <property type="entry name" value="HSP20-like chaperones"/>
    <property type="match status" value="1"/>
</dbReference>
<dbReference type="PROSITE" id="PS01031">
    <property type="entry name" value="SHSP"/>
    <property type="match status" value="1"/>
</dbReference>
<sequence length="142" mass="16093">MRNFDLSPLMRQWIGFDKLANALQNAGESQSFPPYNIEKSDDNHYRITLALAGFRQEDLEIQLEGTRLSVKGTPEQPKEEKKWLHQGLMNQPFSLSFTLAENMEVSGATFVNGLLHIDLIRNEPEPIAAQRIAISERPALNS</sequence>
<proteinExistence type="inferred from homology"/>